<dbReference type="EC" id="4.3.2.3" evidence="1"/>
<dbReference type="EMBL" id="CP001113">
    <property type="protein sequence ID" value="ACF63096.1"/>
    <property type="molecule type" value="Genomic_DNA"/>
</dbReference>
<dbReference type="RefSeq" id="WP_000764659.1">
    <property type="nucleotide sequence ID" value="NZ_CCMR01000003.1"/>
</dbReference>
<dbReference type="SMR" id="B4SXM1"/>
<dbReference type="KEGG" id="see:SNSL254_A0569"/>
<dbReference type="HOGENOM" id="CLU_070848_1_1_6"/>
<dbReference type="UniPathway" id="UPA00395"/>
<dbReference type="Proteomes" id="UP000008824">
    <property type="component" value="Chromosome"/>
</dbReference>
<dbReference type="GO" id="GO:0004848">
    <property type="term" value="F:ureidoglycolate hydrolase activity"/>
    <property type="evidence" value="ECO:0007669"/>
    <property type="project" value="InterPro"/>
</dbReference>
<dbReference type="GO" id="GO:0050385">
    <property type="term" value="F:ureidoglycolate lyase activity"/>
    <property type="evidence" value="ECO:0007669"/>
    <property type="project" value="UniProtKB-UniRule"/>
</dbReference>
<dbReference type="GO" id="GO:0000256">
    <property type="term" value="P:allantoin catabolic process"/>
    <property type="evidence" value="ECO:0007669"/>
    <property type="project" value="UniProtKB-UniRule"/>
</dbReference>
<dbReference type="GO" id="GO:0006145">
    <property type="term" value="P:purine nucleobase catabolic process"/>
    <property type="evidence" value="ECO:0007669"/>
    <property type="project" value="UniProtKB-UniRule"/>
</dbReference>
<dbReference type="CDD" id="cd20298">
    <property type="entry name" value="cupin_UAH"/>
    <property type="match status" value="1"/>
</dbReference>
<dbReference type="FunFam" id="2.60.120.480:FF:000001">
    <property type="entry name" value="Ureidoglycolate lyase"/>
    <property type="match status" value="1"/>
</dbReference>
<dbReference type="Gene3D" id="2.60.120.480">
    <property type="entry name" value="Ureidoglycolate hydrolase"/>
    <property type="match status" value="1"/>
</dbReference>
<dbReference type="HAMAP" id="MF_00616">
    <property type="entry name" value="Ureidogly_lyase"/>
    <property type="match status" value="1"/>
</dbReference>
<dbReference type="InterPro" id="IPR011051">
    <property type="entry name" value="RmlC_Cupin_sf"/>
</dbReference>
<dbReference type="InterPro" id="IPR047233">
    <property type="entry name" value="UAH_cupin"/>
</dbReference>
<dbReference type="InterPro" id="IPR007247">
    <property type="entry name" value="Ureidogly_lyase"/>
</dbReference>
<dbReference type="InterPro" id="IPR023525">
    <property type="entry name" value="Ureidogly_lyase_bac"/>
</dbReference>
<dbReference type="InterPro" id="IPR024060">
    <property type="entry name" value="Ureidoglycolate_lyase_dom_sf"/>
</dbReference>
<dbReference type="NCBIfam" id="NF002948">
    <property type="entry name" value="PRK03606.1-1"/>
    <property type="match status" value="1"/>
</dbReference>
<dbReference type="NCBIfam" id="NF009932">
    <property type="entry name" value="PRK13395.1"/>
    <property type="match status" value="1"/>
</dbReference>
<dbReference type="PANTHER" id="PTHR21221">
    <property type="entry name" value="UREIDOGLYCOLATE HYDROLASE"/>
    <property type="match status" value="1"/>
</dbReference>
<dbReference type="PANTHER" id="PTHR21221:SF1">
    <property type="entry name" value="UREIDOGLYCOLATE LYASE"/>
    <property type="match status" value="1"/>
</dbReference>
<dbReference type="Pfam" id="PF04115">
    <property type="entry name" value="Ureidogly_lyase"/>
    <property type="match status" value="1"/>
</dbReference>
<dbReference type="PIRSF" id="PIRSF017306">
    <property type="entry name" value="Ureidogly_hydro"/>
    <property type="match status" value="1"/>
</dbReference>
<dbReference type="SUPFAM" id="SSF51182">
    <property type="entry name" value="RmlC-like cupins"/>
    <property type="match status" value="1"/>
</dbReference>
<feature type="chain" id="PRO_1000130427" description="Ureidoglycolate lyase">
    <location>
        <begin position="1"/>
        <end position="160"/>
    </location>
</feature>
<name>ALLA_SALNS</name>
<comment type="function">
    <text evidence="1">Catalyzes the catabolism of the allantoin degradation intermediate (S)-ureidoglycolate, generating urea and glyoxylate. Involved in the utilization of allantoin as nitrogen source.</text>
</comment>
<comment type="catalytic activity">
    <reaction evidence="1">
        <text>(S)-ureidoglycolate = urea + glyoxylate</text>
        <dbReference type="Rhea" id="RHEA:11304"/>
        <dbReference type="ChEBI" id="CHEBI:16199"/>
        <dbReference type="ChEBI" id="CHEBI:36655"/>
        <dbReference type="ChEBI" id="CHEBI:57296"/>
        <dbReference type="EC" id="4.3.2.3"/>
    </reaction>
</comment>
<comment type="cofactor">
    <cofactor evidence="1">
        <name>Ni(2+)</name>
        <dbReference type="ChEBI" id="CHEBI:49786"/>
    </cofactor>
</comment>
<comment type="pathway">
    <text evidence="1">Nitrogen metabolism; (S)-allantoin degradation.</text>
</comment>
<comment type="subunit">
    <text evidence="1">Homodimer.</text>
</comment>
<comment type="similarity">
    <text evidence="1">Belongs to the ureidoglycolate lyase family.</text>
</comment>
<gene>
    <name evidence="1" type="primary">allA</name>
    <name type="ordered locus">SNSL254_A0569</name>
</gene>
<organism>
    <name type="scientific">Salmonella newport (strain SL254)</name>
    <dbReference type="NCBI Taxonomy" id="423368"/>
    <lineage>
        <taxon>Bacteria</taxon>
        <taxon>Pseudomonadati</taxon>
        <taxon>Pseudomonadota</taxon>
        <taxon>Gammaproteobacteria</taxon>
        <taxon>Enterobacterales</taxon>
        <taxon>Enterobacteriaceae</taxon>
        <taxon>Salmonella</taxon>
    </lineage>
</organism>
<evidence type="ECO:0000255" key="1">
    <source>
        <dbReference type="HAMAP-Rule" id="MF_00616"/>
    </source>
</evidence>
<accession>B4SXM1</accession>
<proteinExistence type="inferred from homology"/>
<sequence>MKLEVLPLDQKTFSAYGDVIETQERDFFHINNGLVERYHDLAKVEVLEQDRTLISINRAQPAAMPIVVHELERHPLGTQAFVPMNGEAFVVIVALGDDKPDLSTLRAFISNGRQGVNYHRNVWHHPLFAWQTVTDFLTVDRGGSDNCDVESIPTHELCFA</sequence>
<keyword id="KW-0456">Lyase</keyword>
<keyword id="KW-0659">Purine metabolism</keyword>
<protein>
    <recommendedName>
        <fullName evidence="1">Ureidoglycolate lyase</fullName>
        <ecNumber evidence="1">4.3.2.3</ecNumber>
    </recommendedName>
    <alternativeName>
        <fullName evidence="1">Ureidoglycolatase</fullName>
    </alternativeName>
</protein>
<reference key="1">
    <citation type="journal article" date="2011" name="J. Bacteriol.">
        <title>Comparative genomics of 28 Salmonella enterica isolates: evidence for CRISPR-mediated adaptive sublineage evolution.</title>
        <authorList>
            <person name="Fricke W.F."/>
            <person name="Mammel M.K."/>
            <person name="McDermott P.F."/>
            <person name="Tartera C."/>
            <person name="White D.G."/>
            <person name="Leclerc J.E."/>
            <person name="Ravel J."/>
            <person name="Cebula T.A."/>
        </authorList>
    </citation>
    <scope>NUCLEOTIDE SEQUENCE [LARGE SCALE GENOMIC DNA]</scope>
    <source>
        <strain>SL254</strain>
    </source>
</reference>